<accession>Q8E9N4</accession>
<keyword id="KW-0004">4Fe-4S</keyword>
<keyword id="KW-0028">Amino-acid biosynthesis</keyword>
<keyword id="KW-0100">Branched-chain amino acid biosynthesis</keyword>
<keyword id="KW-0408">Iron</keyword>
<keyword id="KW-0411">Iron-sulfur</keyword>
<keyword id="KW-0432">Leucine biosynthesis</keyword>
<keyword id="KW-0456">Lyase</keyword>
<keyword id="KW-0479">Metal-binding</keyword>
<keyword id="KW-1185">Reference proteome</keyword>
<comment type="function">
    <text evidence="1">Catalyzes the isomerization between 2-isopropylmalate and 3-isopropylmalate, via the formation of 2-isopropylmaleate.</text>
</comment>
<comment type="catalytic activity">
    <reaction evidence="1">
        <text>(2R,3S)-3-isopropylmalate = (2S)-2-isopropylmalate</text>
        <dbReference type="Rhea" id="RHEA:32287"/>
        <dbReference type="ChEBI" id="CHEBI:1178"/>
        <dbReference type="ChEBI" id="CHEBI:35121"/>
        <dbReference type="EC" id="4.2.1.33"/>
    </reaction>
</comment>
<comment type="cofactor">
    <cofactor evidence="1">
        <name>[4Fe-4S] cluster</name>
        <dbReference type="ChEBI" id="CHEBI:49883"/>
    </cofactor>
    <text evidence="1">Binds 1 [4Fe-4S] cluster per subunit.</text>
</comment>
<comment type="pathway">
    <text evidence="1">Amino-acid biosynthesis; L-leucine biosynthesis; L-leucine from 3-methyl-2-oxobutanoate: step 2/4.</text>
</comment>
<comment type="subunit">
    <text evidence="1">Heterodimer of LeuC and LeuD.</text>
</comment>
<comment type="similarity">
    <text evidence="1">Belongs to the aconitase/IPM isomerase family. LeuC type 1 subfamily.</text>
</comment>
<proteinExistence type="inferred from homology"/>
<sequence>MTVPSKTIAPKTLYQKVWDAHIVATPEGEAPIIYVDRHLVHEVTSPQAFSGLKVAGRQLRAPEKTFATMDHNTSTRSASLDALSPMARIQVETLAQNCKDFGVLLYDIHHPNQGIVHVMGPELGITLPGTVIVCGDSHTATHGAFGALAFGIGTSEVEHVLATQTLRQLKAKTMKIEVRGQVTDGVTAKDIVLAIIGKIGMDGGTGYVVEFCGEAIEALSMEGRMTVCNMAIEMGAKAGMVAPDQTTFDYLEGREFAPKGEDWAQAVAEWKTLKTDVGAEFDATVVLDAADIAPQLTWGTNPGQVVAIDAPVPNPADEVNPTIRSSMEKALDYIGLTAGTPMTEVAINKVFIGSCTNSRIEDLRSAAKHAKGRKVAAGVTAIVVPGSGQVKAQAEAEGLDKIFIEAGFEWRLPGCSMCLAMNDDRLEAGDRCASTSNRNFEGRQGRGSRTHLVSPAMAAAAAIAGHFVDIRKPY</sequence>
<dbReference type="EC" id="4.2.1.33" evidence="1"/>
<dbReference type="EMBL" id="AE014299">
    <property type="protein sequence ID" value="AAN57205.1"/>
    <property type="molecule type" value="Genomic_DNA"/>
</dbReference>
<dbReference type="RefSeq" id="NP_719761.1">
    <property type="nucleotide sequence ID" value="NC_004347.2"/>
</dbReference>
<dbReference type="RefSeq" id="WP_011073914.1">
    <property type="nucleotide sequence ID" value="NC_004347.2"/>
</dbReference>
<dbReference type="SMR" id="Q8E9N4"/>
<dbReference type="STRING" id="211586.SO_4234"/>
<dbReference type="PaxDb" id="211586-SO_4234"/>
<dbReference type="KEGG" id="son:SO_4234"/>
<dbReference type="PATRIC" id="fig|211586.12.peg.4093"/>
<dbReference type="eggNOG" id="COG0065">
    <property type="taxonomic scope" value="Bacteria"/>
</dbReference>
<dbReference type="HOGENOM" id="CLU_006714_3_4_6"/>
<dbReference type="OrthoDB" id="9802769at2"/>
<dbReference type="PhylomeDB" id="Q8E9N4"/>
<dbReference type="BioCyc" id="SONE211586:G1GMP-3911-MONOMER"/>
<dbReference type="UniPathway" id="UPA00048">
    <property type="reaction ID" value="UER00071"/>
</dbReference>
<dbReference type="Proteomes" id="UP000008186">
    <property type="component" value="Chromosome"/>
</dbReference>
<dbReference type="GO" id="GO:0003861">
    <property type="term" value="F:3-isopropylmalate dehydratase activity"/>
    <property type="evidence" value="ECO:0007669"/>
    <property type="project" value="UniProtKB-UniRule"/>
</dbReference>
<dbReference type="GO" id="GO:0051539">
    <property type="term" value="F:4 iron, 4 sulfur cluster binding"/>
    <property type="evidence" value="ECO:0007669"/>
    <property type="project" value="UniProtKB-KW"/>
</dbReference>
<dbReference type="GO" id="GO:0046872">
    <property type="term" value="F:metal ion binding"/>
    <property type="evidence" value="ECO:0007669"/>
    <property type="project" value="UniProtKB-KW"/>
</dbReference>
<dbReference type="GO" id="GO:0009098">
    <property type="term" value="P:L-leucine biosynthetic process"/>
    <property type="evidence" value="ECO:0007669"/>
    <property type="project" value="UniProtKB-UniRule"/>
</dbReference>
<dbReference type="CDD" id="cd01583">
    <property type="entry name" value="IPMI"/>
    <property type="match status" value="1"/>
</dbReference>
<dbReference type="FunFam" id="3.30.499.10:FF:000006">
    <property type="entry name" value="3-isopropylmalate dehydratase large subunit"/>
    <property type="match status" value="1"/>
</dbReference>
<dbReference type="FunFam" id="3.30.499.10:FF:000007">
    <property type="entry name" value="3-isopropylmalate dehydratase large subunit"/>
    <property type="match status" value="1"/>
</dbReference>
<dbReference type="Gene3D" id="3.30.499.10">
    <property type="entry name" value="Aconitase, domain 3"/>
    <property type="match status" value="2"/>
</dbReference>
<dbReference type="HAMAP" id="MF_01026">
    <property type="entry name" value="LeuC_type1"/>
    <property type="match status" value="1"/>
</dbReference>
<dbReference type="InterPro" id="IPR004430">
    <property type="entry name" value="3-IsopropMal_deHydase_lsu"/>
</dbReference>
<dbReference type="InterPro" id="IPR015931">
    <property type="entry name" value="Acnase/IPM_dHydase_lsu_aba_1/3"/>
</dbReference>
<dbReference type="InterPro" id="IPR001030">
    <property type="entry name" value="Acoase/IPM_deHydtase_lsu_aba"/>
</dbReference>
<dbReference type="InterPro" id="IPR018136">
    <property type="entry name" value="Aconitase_4Fe-4S_BS"/>
</dbReference>
<dbReference type="InterPro" id="IPR036008">
    <property type="entry name" value="Aconitase_4Fe-4S_dom"/>
</dbReference>
<dbReference type="InterPro" id="IPR050067">
    <property type="entry name" value="IPM_dehydratase_rel_enz"/>
</dbReference>
<dbReference type="InterPro" id="IPR033941">
    <property type="entry name" value="IPMI_cat"/>
</dbReference>
<dbReference type="NCBIfam" id="TIGR00170">
    <property type="entry name" value="leuC"/>
    <property type="match status" value="1"/>
</dbReference>
<dbReference type="NCBIfam" id="NF004016">
    <property type="entry name" value="PRK05478.1"/>
    <property type="match status" value="1"/>
</dbReference>
<dbReference type="NCBIfam" id="NF009116">
    <property type="entry name" value="PRK12466.1"/>
    <property type="match status" value="1"/>
</dbReference>
<dbReference type="PANTHER" id="PTHR43822:SF9">
    <property type="entry name" value="3-ISOPROPYLMALATE DEHYDRATASE"/>
    <property type="match status" value="1"/>
</dbReference>
<dbReference type="PANTHER" id="PTHR43822">
    <property type="entry name" value="HOMOACONITASE, MITOCHONDRIAL-RELATED"/>
    <property type="match status" value="1"/>
</dbReference>
<dbReference type="Pfam" id="PF00330">
    <property type="entry name" value="Aconitase"/>
    <property type="match status" value="1"/>
</dbReference>
<dbReference type="PRINTS" id="PR00415">
    <property type="entry name" value="ACONITASE"/>
</dbReference>
<dbReference type="SUPFAM" id="SSF53732">
    <property type="entry name" value="Aconitase iron-sulfur domain"/>
    <property type="match status" value="1"/>
</dbReference>
<dbReference type="PROSITE" id="PS00450">
    <property type="entry name" value="ACONITASE_1"/>
    <property type="match status" value="1"/>
</dbReference>
<dbReference type="PROSITE" id="PS01244">
    <property type="entry name" value="ACONITASE_2"/>
    <property type="match status" value="1"/>
</dbReference>
<protein>
    <recommendedName>
        <fullName evidence="1">3-isopropylmalate dehydratase large subunit</fullName>
        <ecNumber evidence="1">4.2.1.33</ecNumber>
    </recommendedName>
    <alternativeName>
        <fullName evidence="1">Alpha-IPM isomerase</fullName>
        <shortName evidence="1">IPMI</shortName>
    </alternativeName>
    <alternativeName>
        <fullName evidence="1">Isopropylmalate isomerase</fullName>
    </alternativeName>
</protein>
<name>LEUC_SHEON</name>
<organism>
    <name type="scientific">Shewanella oneidensis (strain ATCC 700550 / JCM 31522 / CIP 106686 / LMG 19005 / NCIMB 14063 / MR-1)</name>
    <dbReference type="NCBI Taxonomy" id="211586"/>
    <lineage>
        <taxon>Bacteria</taxon>
        <taxon>Pseudomonadati</taxon>
        <taxon>Pseudomonadota</taxon>
        <taxon>Gammaproteobacteria</taxon>
        <taxon>Alteromonadales</taxon>
        <taxon>Shewanellaceae</taxon>
        <taxon>Shewanella</taxon>
    </lineage>
</organism>
<reference key="1">
    <citation type="journal article" date="2002" name="Nat. Biotechnol.">
        <title>Genome sequence of the dissimilatory metal ion-reducing bacterium Shewanella oneidensis.</title>
        <authorList>
            <person name="Heidelberg J.F."/>
            <person name="Paulsen I.T."/>
            <person name="Nelson K.E."/>
            <person name="Gaidos E.J."/>
            <person name="Nelson W.C."/>
            <person name="Read T.D."/>
            <person name="Eisen J.A."/>
            <person name="Seshadri R."/>
            <person name="Ward N.L."/>
            <person name="Methe B.A."/>
            <person name="Clayton R.A."/>
            <person name="Meyer T."/>
            <person name="Tsapin A."/>
            <person name="Scott J."/>
            <person name="Beanan M.J."/>
            <person name="Brinkac L.M."/>
            <person name="Daugherty S.C."/>
            <person name="DeBoy R.T."/>
            <person name="Dodson R.J."/>
            <person name="Durkin A.S."/>
            <person name="Haft D.H."/>
            <person name="Kolonay J.F."/>
            <person name="Madupu R."/>
            <person name="Peterson J.D."/>
            <person name="Umayam L.A."/>
            <person name="White O."/>
            <person name="Wolf A.M."/>
            <person name="Vamathevan J.J."/>
            <person name="Weidman J.F."/>
            <person name="Impraim M."/>
            <person name="Lee K."/>
            <person name="Berry K.J."/>
            <person name="Lee C."/>
            <person name="Mueller J."/>
            <person name="Khouri H.M."/>
            <person name="Gill J."/>
            <person name="Utterback T.R."/>
            <person name="McDonald L.A."/>
            <person name="Feldblyum T.V."/>
            <person name="Smith H.O."/>
            <person name="Venter J.C."/>
            <person name="Nealson K.H."/>
            <person name="Fraser C.M."/>
        </authorList>
    </citation>
    <scope>NUCLEOTIDE SEQUENCE [LARGE SCALE GENOMIC DNA]</scope>
    <source>
        <strain>ATCC 700550 / JCM 31522 / CIP 106686 / LMG 19005 / NCIMB 14063 / MR-1</strain>
    </source>
</reference>
<evidence type="ECO:0000255" key="1">
    <source>
        <dbReference type="HAMAP-Rule" id="MF_01026"/>
    </source>
</evidence>
<feature type="chain" id="PRO_0000076805" description="3-isopropylmalate dehydratase large subunit">
    <location>
        <begin position="1"/>
        <end position="474"/>
    </location>
</feature>
<feature type="binding site" evidence="1">
    <location>
        <position position="355"/>
    </location>
    <ligand>
        <name>[4Fe-4S] cluster</name>
        <dbReference type="ChEBI" id="CHEBI:49883"/>
    </ligand>
</feature>
<feature type="binding site" evidence="1">
    <location>
        <position position="415"/>
    </location>
    <ligand>
        <name>[4Fe-4S] cluster</name>
        <dbReference type="ChEBI" id="CHEBI:49883"/>
    </ligand>
</feature>
<feature type="binding site" evidence="1">
    <location>
        <position position="418"/>
    </location>
    <ligand>
        <name>[4Fe-4S] cluster</name>
        <dbReference type="ChEBI" id="CHEBI:49883"/>
    </ligand>
</feature>
<gene>
    <name evidence="1" type="primary">leuC</name>
    <name type="ordered locus">SO_4234</name>
</gene>